<organism>
    <name type="scientific">Escherichia coli O6:H1 (strain CFT073 / ATCC 700928 / UPEC)</name>
    <dbReference type="NCBI Taxonomy" id="199310"/>
    <lineage>
        <taxon>Bacteria</taxon>
        <taxon>Pseudomonadati</taxon>
        <taxon>Pseudomonadota</taxon>
        <taxon>Gammaproteobacteria</taxon>
        <taxon>Enterobacterales</taxon>
        <taxon>Enterobacteriaceae</taxon>
        <taxon>Escherichia</taxon>
    </lineage>
</organism>
<dbReference type="EMBL" id="AE014075">
    <property type="protein sequence ID" value="AAN80765.1"/>
    <property type="molecule type" value="Genomic_DNA"/>
</dbReference>
<dbReference type="RefSeq" id="WP_001291603.1">
    <property type="nucleotide sequence ID" value="NZ_CP051263.1"/>
</dbReference>
<dbReference type="SMR" id="P0ABY8"/>
<dbReference type="STRING" id="199310.c2306"/>
<dbReference type="GeneID" id="93776196"/>
<dbReference type="KEGG" id="ecc:c2306"/>
<dbReference type="eggNOG" id="ENOG502Z927">
    <property type="taxonomic scope" value="Bacteria"/>
</dbReference>
<dbReference type="HOGENOM" id="CLU_122824_0_0_6"/>
<dbReference type="BioCyc" id="ECOL199310:C2306-MONOMER"/>
<dbReference type="Proteomes" id="UP000001410">
    <property type="component" value="Chromosome"/>
</dbReference>
<dbReference type="GO" id="GO:0005737">
    <property type="term" value="C:cytoplasm"/>
    <property type="evidence" value="ECO:0007669"/>
    <property type="project" value="UniProtKB-SubCell"/>
</dbReference>
<dbReference type="GO" id="GO:0003677">
    <property type="term" value="F:DNA binding"/>
    <property type="evidence" value="ECO:0007669"/>
    <property type="project" value="UniProtKB-UniRule"/>
</dbReference>
<dbReference type="GO" id="GO:0008270">
    <property type="term" value="F:zinc ion binding"/>
    <property type="evidence" value="ECO:0007669"/>
    <property type="project" value="UniProtKB-UniRule"/>
</dbReference>
<dbReference type="GO" id="GO:0044781">
    <property type="term" value="P:bacterial-type flagellum organization"/>
    <property type="evidence" value="ECO:0007669"/>
    <property type="project" value="UniProtKB-KW"/>
</dbReference>
<dbReference type="GO" id="GO:0045893">
    <property type="term" value="P:positive regulation of DNA-templated transcription"/>
    <property type="evidence" value="ECO:0007669"/>
    <property type="project" value="InterPro"/>
</dbReference>
<dbReference type="GO" id="GO:1902208">
    <property type="term" value="P:regulation of bacterial-type flagellum assembly"/>
    <property type="evidence" value="ECO:0007669"/>
    <property type="project" value="UniProtKB-UniRule"/>
</dbReference>
<dbReference type="HAMAP" id="MF_01891">
    <property type="entry name" value="FhlC"/>
    <property type="match status" value="1"/>
</dbReference>
<dbReference type="InterPro" id="IPR007944">
    <property type="entry name" value="FlhC"/>
</dbReference>
<dbReference type="NCBIfam" id="NF009365">
    <property type="entry name" value="PRK12722.1"/>
    <property type="match status" value="1"/>
</dbReference>
<dbReference type="Pfam" id="PF05280">
    <property type="entry name" value="FlhC"/>
    <property type="match status" value="1"/>
</dbReference>
<dbReference type="PIRSF" id="PIRSF003159">
    <property type="entry name" value="FlhC"/>
    <property type="match status" value="1"/>
</dbReference>
<dbReference type="SUPFAM" id="SSF160930">
    <property type="entry name" value="FlhC-like"/>
    <property type="match status" value="1"/>
</dbReference>
<sequence length="192" mass="21566">MSEKSIVQEARDIQLAMELITLGARLQMLESETQLSRGRLIKLYKELRGSPPPKGMLPFSTDWFMTWEQNVHASMFCNAWQFLLKTGLCNGVDAVIKAYRLYLEQCPQAEEGPLLALTRAWTLVRFVESGLLQLSSCNCCGGNFITHAHQPVGSFACSLCQPPSRAVKRRKLSQNPADIIPQLLDEQRVQAV</sequence>
<keyword id="KW-0010">Activator</keyword>
<keyword id="KW-1005">Bacterial flagellum biogenesis</keyword>
<keyword id="KW-0963">Cytoplasm</keyword>
<keyword id="KW-0238">DNA-binding</keyword>
<keyword id="KW-0479">Metal-binding</keyword>
<keyword id="KW-1185">Reference proteome</keyword>
<keyword id="KW-0804">Transcription</keyword>
<keyword id="KW-0805">Transcription regulation</keyword>
<keyword id="KW-0862">Zinc</keyword>
<accession>P0ABY8</accession>
<accession>P11165</accession>
<accession>P76303</accession>
<comment type="function">
    <text evidence="1">Functions in complex with FlhD as a master transcriptional regulator that regulates transcription of several flagellar and non-flagellar operons by binding to their promoter region. Activates expression of class 2 flagellar genes, including fliA, which is a flagellum-specific sigma factor that turns on the class 3 genes. Also regulates genes whose products function in a variety of physiological pathways.</text>
</comment>
<comment type="cofactor">
    <cofactor evidence="1">
        <name>Zn(2+)</name>
        <dbReference type="ChEBI" id="CHEBI:29105"/>
    </cofactor>
    <text evidence="1">Binds 1 zinc ion per subunit.</text>
</comment>
<comment type="subunit">
    <text evidence="1">Heterohexamer composed of two FlhC and four FlhD subunits. Each FlhC binds a FlhD dimer, forming a heterotrimer, and a hexamer assembles by dimerization of two heterotrimers.</text>
</comment>
<comment type="subcellular location">
    <subcellularLocation>
        <location evidence="1">Cytoplasm</location>
    </subcellularLocation>
</comment>
<comment type="similarity">
    <text evidence="1">Belongs to the FlhC family.</text>
</comment>
<gene>
    <name evidence="1" type="primary">flhC</name>
    <name type="ordered locus">c2306</name>
</gene>
<protein>
    <recommendedName>
        <fullName evidence="1">Flagellar transcriptional regulator FlhC</fullName>
    </recommendedName>
</protein>
<reference key="1">
    <citation type="journal article" date="2002" name="Proc. Natl. Acad. Sci. U.S.A.">
        <title>Extensive mosaic structure revealed by the complete genome sequence of uropathogenic Escherichia coli.</title>
        <authorList>
            <person name="Welch R.A."/>
            <person name="Burland V."/>
            <person name="Plunkett G. III"/>
            <person name="Redford P."/>
            <person name="Roesch P."/>
            <person name="Rasko D."/>
            <person name="Buckles E.L."/>
            <person name="Liou S.-R."/>
            <person name="Boutin A."/>
            <person name="Hackett J."/>
            <person name="Stroud D."/>
            <person name="Mayhew G.F."/>
            <person name="Rose D.J."/>
            <person name="Zhou S."/>
            <person name="Schwartz D.C."/>
            <person name="Perna N.T."/>
            <person name="Mobley H.L.T."/>
            <person name="Donnenberg M.S."/>
            <person name="Blattner F.R."/>
        </authorList>
    </citation>
    <scope>NUCLEOTIDE SEQUENCE [LARGE SCALE GENOMIC DNA]</scope>
    <source>
        <strain>CFT073 / ATCC 700928 / UPEC</strain>
    </source>
</reference>
<proteinExistence type="inferred from homology"/>
<name>FLHC_ECOL6</name>
<feature type="chain" id="PRO_0000064339" description="Flagellar transcriptional regulator FlhC">
    <location>
        <begin position="1"/>
        <end position="192"/>
    </location>
</feature>
<feature type="binding site" evidence="1">
    <location>
        <position position="137"/>
    </location>
    <ligand>
        <name>Zn(2+)</name>
        <dbReference type="ChEBI" id="CHEBI:29105"/>
    </ligand>
</feature>
<feature type="binding site" evidence="1">
    <location>
        <position position="140"/>
    </location>
    <ligand>
        <name>Zn(2+)</name>
        <dbReference type="ChEBI" id="CHEBI:29105"/>
    </ligand>
</feature>
<feature type="binding site" evidence="1">
    <location>
        <position position="157"/>
    </location>
    <ligand>
        <name>Zn(2+)</name>
        <dbReference type="ChEBI" id="CHEBI:29105"/>
    </ligand>
</feature>
<feature type="binding site" evidence="1">
    <location>
        <position position="160"/>
    </location>
    <ligand>
        <name>Zn(2+)</name>
        <dbReference type="ChEBI" id="CHEBI:29105"/>
    </ligand>
</feature>
<evidence type="ECO:0000255" key="1">
    <source>
        <dbReference type="HAMAP-Rule" id="MF_01891"/>
    </source>
</evidence>